<protein>
    <recommendedName>
        <fullName>Diuretic hormone class 2</fullName>
    </recommendedName>
    <alternativeName>
        <fullName>Diuretic peptide</fullName>
        <shortName>DP</shortName>
    </alternativeName>
    <alternativeName>
        <fullName>GLDLGLSRGFSGSQAAKHLMGLAAANYAGGP-amide</fullName>
    </alternativeName>
    <component>
        <recommendedName>
            <fullName>Brain peptide GLDLGLSRGFSGSQAA</fullName>
        </recommendedName>
    </component>
    <component>
        <recommendedName>
            <fullName>Brain peptide GLDLGLSRGFSGSQAAKH</fullName>
        </recommendedName>
    </component>
</protein>
<name>DIUX_APIME</name>
<keyword id="KW-0027">Amidation</keyword>
<keyword id="KW-0903">Direct protein sequencing</keyword>
<keyword id="KW-0372">Hormone</keyword>
<keyword id="KW-1185">Reference proteome</keyword>
<keyword id="KW-0964">Secreted</keyword>
<comment type="function">
    <text evidence="1">Regulation of fluid secretion. Stimulates primary urine secretion by Malpighian tubules and causes a dose-dependent stimulation of cAMP levels in the tubules. Has a nonselective effect on Na(+)/K(+) ion transport. In vitro, primarily elevates intracellular Ca(2+) (By similarity).</text>
</comment>
<comment type="subcellular location">
    <subcellularLocation>
        <location evidence="1">Secreted</location>
    </subcellularLocation>
</comment>
<comment type="mass spectrometry" mass="2985.52" method="Electrospray" evidence="2">
    <molecule>Diuretic hormone class 2</molecule>
</comment>
<comment type="mass spectrometry" mass="2985.52" method="MALDI" evidence="2">
    <molecule>Diuretic hormone class 2</molecule>
</comment>
<comment type="mass spectrometry" mass="1534.76" method="Electrospray" evidence="2">
    <molecule>Brain peptide GLDLGLSRGFSGSQAA</molecule>
</comment>
<comment type="mass spectrometry" mass="1799.93" method="Electrospray" evidence="2">
    <molecule>Brain peptide GLDLGLSRGFSGSQAAKH</molecule>
</comment>
<comment type="similarity">
    <text evidence="3">Belongs to the diuretic hormone class 2 family.</text>
</comment>
<feature type="peptide" id="PRO_0000339295" description="Diuretic hormone class 2">
    <location>
        <begin position="1"/>
        <end position="31"/>
    </location>
</feature>
<feature type="peptide" id="PRO_0000339297" description="Brain peptide GLDLGLSRGFSGSQAAKH">
    <location>
        <begin position="1"/>
        <end position="18"/>
    </location>
</feature>
<feature type="peptide" id="PRO_0000339296" description="Brain peptide GLDLGLSRGFSGSQAA">
    <location>
        <begin position="1"/>
        <end position="16"/>
    </location>
</feature>
<feature type="modified residue" description="Proline amide" evidence="2">
    <location>
        <position position="31"/>
    </location>
</feature>
<evidence type="ECO:0000250" key="1">
    <source>
        <dbReference type="UniProtKB" id="P82372"/>
    </source>
</evidence>
<evidence type="ECO:0000269" key="2">
    <source>
    </source>
</evidence>
<evidence type="ECO:0000305" key="3"/>
<proteinExistence type="evidence at protein level"/>
<organism>
    <name type="scientific">Apis mellifera</name>
    <name type="common">Honeybee</name>
    <dbReference type="NCBI Taxonomy" id="7460"/>
    <lineage>
        <taxon>Eukaryota</taxon>
        <taxon>Metazoa</taxon>
        <taxon>Ecdysozoa</taxon>
        <taxon>Arthropoda</taxon>
        <taxon>Hexapoda</taxon>
        <taxon>Insecta</taxon>
        <taxon>Pterygota</taxon>
        <taxon>Neoptera</taxon>
        <taxon>Endopterygota</taxon>
        <taxon>Hymenoptera</taxon>
        <taxon>Apocrita</taxon>
        <taxon>Aculeata</taxon>
        <taxon>Apoidea</taxon>
        <taxon>Anthophila</taxon>
        <taxon>Apidae</taxon>
        <taxon>Apis</taxon>
    </lineage>
</organism>
<accession>P85830</accession>
<dbReference type="STRING" id="7460.P85830"/>
<dbReference type="PaxDb" id="7460-GB45734-PA"/>
<dbReference type="eggNOG" id="ENOG502SAVV">
    <property type="taxonomic scope" value="Eukaryota"/>
</dbReference>
<dbReference type="InParanoid" id="P85830"/>
<dbReference type="Proteomes" id="UP000005203">
    <property type="component" value="Unplaced"/>
</dbReference>
<dbReference type="GO" id="GO:0005615">
    <property type="term" value="C:extracellular space"/>
    <property type="evidence" value="ECO:0007669"/>
    <property type="project" value="TreeGrafter"/>
</dbReference>
<dbReference type="GO" id="GO:0008613">
    <property type="term" value="F:diuretic hormone activity"/>
    <property type="evidence" value="ECO:0007669"/>
    <property type="project" value="InterPro"/>
</dbReference>
<dbReference type="GO" id="GO:0001664">
    <property type="term" value="F:G protein-coupled receptor binding"/>
    <property type="evidence" value="ECO:0007669"/>
    <property type="project" value="TreeGrafter"/>
</dbReference>
<dbReference type="GO" id="GO:0007589">
    <property type="term" value="P:body fluid secretion"/>
    <property type="evidence" value="ECO:0007669"/>
    <property type="project" value="InterPro"/>
</dbReference>
<dbReference type="InterPro" id="IPR034439">
    <property type="entry name" value="DH2-like"/>
</dbReference>
<dbReference type="PANTHER" id="PTHR41146">
    <property type="entry name" value="DIURETIC HORMONE CLASS 2"/>
    <property type="match status" value="1"/>
</dbReference>
<dbReference type="PANTHER" id="PTHR41146:SF1">
    <property type="entry name" value="DIURETIC HORMONE CLASS 2"/>
    <property type="match status" value="1"/>
</dbReference>
<sequence length="31" mass="2988">GLDLGLSRGFSGSQAAKHLMGLAAANYAGGP</sequence>
<reference evidence="3" key="1">
    <citation type="journal article" date="2006" name="Science">
        <title>From the genome to the proteome: uncovering peptides in the Apis brain.</title>
        <authorList>
            <person name="Hummon A.B."/>
            <person name="Richmond T.A."/>
            <person name="Verleyen P."/>
            <person name="Baggerman G."/>
            <person name="Huybrechts J."/>
            <person name="Ewing M.A."/>
            <person name="Vierstraete E."/>
            <person name="Rodriguez-Zas S.L."/>
            <person name="Schoofs L."/>
            <person name="Robinson G.E."/>
            <person name="Sweedler J.V."/>
        </authorList>
    </citation>
    <scope>PROTEIN SEQUENCE</scope>
    <scope>MASS SPECTROMETRY</scope>
    <scope>AMIDATION AT PRO-31</scope>
    <source>
        <tissue evidence="2">Brain</tissue>
    </source>
</reference>